<evidence type="ECO:0000255" key="1">
    <source>
        <dbReference type="HAMAP-Rule" id="MF_00307"/>
    </source>
</evidence>
<feature type="chain" id="PRO_0000124869" description="Prefoldin subunit beta">
    <location>
        <begin position="1"/>
        <end position="125"/>
    </location>
</feature>
<protein>
    <recommendedName>
        <fullName evidence="1">Prefoldin subunit beta</fullName>
    </recommendedName>
    <alternativeName>
        <fullName evidence="1">GimC subunit beta</fullName>
    </alternativeName>
</protein>
<name>PFDB_SULAC</name>
<accession>Q4JB32</accession>
<dbReference type="EMBL" id="CP000077">
    <property type="protein sequence ID" value="AAY79997.1"/>
    <property type="molecule type" value="Genomic_DNA"/>
</dbReference>
<dbReference type="RefSeq" id="WP_011277499.1">
    <property type="nucleotide sequence ID" value="NC_007181.1"/>
</dbReference>
<dbReference type="SMR" id="Q4JB32"/>
<dbReference type="STRING" id="330779.Saci_0605"/>
<dbReference type="GeneID" id="14551126"/>
<dbReference type="KEGG" id="sai:Saci_0605"/>
<dbReference type="PATRIC" id="fig|330779.12.peg.584"/>
<dbReference type="eggNOG" id="arCOG01342">
    <property type="taxonomic scope" value="Archaea"/>
</dbReference>
<dbReference type="HOGENOM" id="CLU_131909_2_1_2"/>
<dbReference type="Proteomes" id="UP000001018">
    <property type="component" value="Chromosome"/>
</dbReference>
<dbReference type="GO" id="GO:0005737">
    <property type="term" value="C:cytoplasm"/>
    <property type="evidence" value="ECO:0007669"/>
    <property type="project" value="UniProtKB-SubCell"/>
</dbReference>
<dbReference type="GO" id="GO:0016272">
    <property type="term" value="C:prefoldin complex"/>
    <property type="evidence" value="ECO:0007669"/>
    <property type="project" value="UniProtKB-UniRule"/>
</dbReference>
<dbReference type="GO" id="GO:0051082">
    <property type="term" value="F:unfolded protein binding"/>
    <property type="evidence" value="ECO:0007669"/>
    <property type="project" value="UniProtKB-UniRule"/>
</dbReference>
<dbReference type="GO" id="GO:0006457">
    <property type="term" value="P:protein folding"/>
    <property type="evidence" value="ECO:0007669"/>
    <property type="project" value="UniProtKB-UniRule"/>
</dbReference>
<dbReference type="CDD" id="cd23162">
    <property type="entry name" value="Prefoldin_beta_GimC"/>
    <property type="match status" value="1"/>
</dbReference>
<dbReference type="FunFam" id="1.10.287.370:FF:000013">
    <property type="entry name" value="Prefoldin subunit beta"/>
    <property type="match status" value="1"/>
</dbReference>
<dbReference type="Gene3D" id="1.10.287.370">
    <property type="match status" value="1"/>
</dbReference>
<dbReference type="HAMAP" id="MF_00307">
    <property type="entry name" value="PfdB"/>
    <property type="match status" value="1"/>
</dbReference>
<dbReference type="InterPro" id="IPR002777">
    <property type="entry name" value="PFD_beta-like"/>
</dbReference>
<dbReference type="InterPro" id="IPR012713">
    <property type="entry name" value="PfdB"/>
</dbReference>
<dbReference type="InterPro" id="IPR009053">
    <property type="entry name" value="Prefoldin"/>
</dbReference>
<dbReference type="NCBIfam" id="TIGR02338">
    <property type="entry name" value="gimC_beta"/>
    <property type="match status" value="1"/>
</dbReference>
<dbReference type="Pfam" id="PF01920">
    <property type="entry name" value="Prefoldin_2"/>
    <property type="match status" value="1"/>
</dbReference>
<dbReference type="SUPFAM" id="SSF46579">
    <property type="entry name" value="Prefoldin"/>
    <property type="match status" value="1"/>
</dbReference>
<reference key="1">
    <citation type="journal article" date="2005" name="J. Bacteriol.">
        <title>The genome of Sulfolobus acidocaldarius, a model organism of the Crenarchaeota.</title>
        <authorList>
            <person name="Chen L."/>
            <person name="Bruegger K."/>
            <person name="Skovgaard M."/>
            <person name="Redder P."/>
            <person name="She Q."/>
            <person name="Torarinsson E."/>
            <person name="Greve B."/>
            <person name="Awayez M."/>
            <person name="Zibat A."/>
            <person name="Klenk H.-P."/>
            <person name="Garrett R.A."/>
        </authorList>
    </citation>
    <scope>NUCLEOTIDE SEQUENCE [LARGE SCALE GENOMIC DNA]</scope>
    <source>
        <strain>ATCC 33909 / DSM 639 / JCM 8929 / NBRC 15157 / NCIMB 11770</strain>
    </source>
</reference>
<gene>
    <name evidence="1" type="primary">pfdB</name>
    <name type="ordered locus">Saci_0605</name>
</gene>
<comment type="function">
    <text evidence="1">Molecular chaperone capable of stabilizing a range of proteins. Seems to fulfill an ATP-independent, HSP70-like function in archaeal de novo protein folding.</text>
</comment>
<comment type="subunit">
    <text evidence="1">Heterohexamer of two alpha and four beta subunits.</text>
</comment>
<comment type="subcellular location">
    <subcellularLocation>
        <location evidence="1">Cytoplasm</location>
    </subcellularLocation>
</comment>
<comment type="similarity">
    <text evidence="1">Belongs to the prefoldin subunit beta family.</text>
</comment>
<keyword id="KW-0143">Chaperone</keyword>
<keyword id="KW-0963">Cytoplasm</keyword>
<keyword id="KW-1185">Reference proteome</keyword>
<proteinExistence type="inferred from homology"/>
<organism>
    <name type="scientific">Sulfolobus acidocaldarius (strain ATCC 33909 / DSM 639 / JCM 8929 / NBRC 15157 / NCIMB 11770)</name>
    <dbReference type="NCBI Taxonomy" id="330779"/>
    <lineage>
        <taxon>Archaea</taxon>
        <taxon>Thermoproteota</taxon>
        <taxon>Thermoprotei</taxon>
        <taxon>Sulfolobales</taxon>
        <taxon>Sulfolobaceae</taxon>
        <taxon>Sulfolobus</taxon>
    </lineage>
</organism>
<sequence>MTERLPPELQTELVKLQQLQEQLNRVIAERSVIDSQLREVNKVLDELKQLPSDTIIYKIVGNLLVKVNKDNVEKELDDQKTILELRSRTYQNQETKLRTQLEEKQKKVNEMLSKYYPQRGAGAKA</sequence>